<organism>
    <name type="scientific">Emericella nidulans (strain FGSC A4 / ATCC 38163 / CBS 112.46 / NRRL 194 / M139)</name>
    <name type="common">Aspergillus nidulans</name>
    <dbReference type="NCBI Taxonomy" id="227321"/>
    <lineage>
        <taxon>Eukaryota</taxon>
        <taxon>Fungi</taxon>
        <taxon>Dikarya</taxon>
        <taxon>Ascomycota</taxon>
        <taxon>Pezizomycotina</taxon>
        <taxon>Eurotiomycetes</taxon>
        <taxon>Eurotiomycetidae</taxon>
        <taxon>Eurotiales</taxon>
        <taxon>Aspergillaceae</taxon>
        <taxon>Aspergillus</taxon>
        <taxon>Aspergillus subgen. Nidulantes</taxon>
    </lineage>
</organism>
<protein>
    <recommendedName>
        <fullName>Uncharacterized protein AN0679</fullName>
    </recommendedName>
</protein>
<keyword id="KW-1185">Reference proteome</keyword>
<gene>
    <name type="ORF">AN10108</name>
</gene>
<comment type="similarity">
    <text evidence="1">Belongs to the PaiB family.</text>
</comment>
<comment type="sequence caution" evidence="1">
    <conflict type="erroneous gene model prediction">
        <sequence resource="EMBL-CDS" id="EAA65455"/>
    </conflict>
    <text>The predicted gene AN0679 has been split into 2 genes: AN10108 and AN10111.</text>
</comment>
<proteinExistence type="inferred from homology"/>
<evidence type="ECO:0000305" key="1"/>
<feature type="chain" id="PRO_0000226091" description="Uncharacterized protein AN0679">
    <location>
        <begin position="1"/>
        <end position="251"/>
    </location>
</feature>
<name>Y0679_EMENI</name>
<accession>P0C154</accession>
<accession>C8VRR5</accession>
<accession>Q5BFK1</accession>
<sequence>MYLRAVHAEAQISILQQLIRDNPLGILTTAIKSPLYPLIQSSHIPFVLDAPETSDGSLSNGVLRGHMAKQNPQAKALIEALTAQQEQGNTSLELSDEVLVLFNGPHHHYVTPKFYTETKPATGKVVPTWNYAAAQAYGKIRIYCDSKSEETMTFLQKQIEELSHQSETSIMKYSSPWQVSDAPVSYVELLKKNIIGIEITIDRLQGKFKMSQEMGQGDRDGVISGFENLGTDAGKCIANIVRERGEMKDKK</sequence>
<reference key="1">
    <citation type="journal article" date="2005" name="Nature">
        <title>Sequencing of Aspergillus nidulans and comparative analysis with A. fumigatus and A. oryzae.</title>
        <authorList>
            <person name="Galagan J.E."/>
            <person name="Calvo S.E."/>
            <person name="Cuomo C."/>
            <person name="Ma L.-J."/>
            <person name="Wortman J.R."/>
            <person name="Batzoglou S."/>
            <person name="Lee S.-I."/>
            <person name="Bastuerkmen M."/>
            <person name="Spevak C.C."/>
            <person name="Clutterbuck J."/>
            <person name="Kapitonov V."/>
            <person name="Jurka J."/>
            <person name="Scazzocchio C."/>
            <person name="Farman M.L."/>
            <person name="Butler J."/>
            <person name="Purcell S."/>
            <person name="Harris S."/>
            <person name="Braus G.H."/>
            <person name="Draht O."/>
            <person name="Busch S."/>
            <person name="D'Enfert C."/>
            <person name="Bouchier C."/>
            <person name="Goldman G.H."/>
            <person name="Bell-Pedersen D."/>
            <person name="Griffiths-Jones S."/>
            <person name="Doonan J.H."/>
            <person name="Yu J."/>
            <person name="Vienken K."/>
            <person name="Pain A."/>
            <person name="Freitag M."/>
            <person name="Selker E.U."/>
            <person name="Archer D.B."/>
            <person name="Penalva M.A."/>
            <person name="Oakley B.R."/>
            <person name="Momany M."/>
            <person name="Tanaka T."/>
            <person name="Kumagai T."/>
            <person name="Asai K."/>
            <person name="Machida M."/>
            <person name="Nierman W.C."/>
            <person name="Denning D.W."/>
            <person name="Caddick M.X."/>
            <person name="Hynes M."/>
            <person name="Paoletti M."/>
            <person name="Fischer R."/>
            <person name="Miller B.L."/>
            <person name="Dyer P.S."/>
            <person name="Sachs M.S."/>
            <person name="Osmani S.A."/>
            <person name="Birren B.W."/>
        </authorList>
    </citation>
    <scope>NUCLEOTIDE SEQUENCE [LARGE SCALE GENOMIC DNA]</scope>
    <source>
        <strain>FGSC A4 / ATCC 38163 / CBS 112.46 / NRRL 194 / M139</strain>
    </source>
</reference>
<reference key="2">
    <citation type="journal article" date="2009" name="Fungal Genet. Biol.">
        <title>The 2008 update of the Aspergillus nidulans genome annotation: a community effort.</title>
        <authorList>
            <person name="Wortman J.R."/>
            <person name="Gilsenan J.M."/>
            <person name="Joardar V."/>
            <person name="Deegan J."/>
            <person name="Clutterbuck J."/>
            <person name="Andersen M.R."/>
            <person name="Archer D."/>
            <person name="Bencina M."/>
            <person name="Braus G."/>
            <person name="Coutinho P."/>
            <person name="von Dohren H."/>
            <person name="Doonan J."/>
            <person name="Driessen A.J."/>
            <person name="Durek P."/>
            <person name="Espeso E."/>
            <person name="Fekete E."/>
            <person name="Flipphi M."/>
            <person name="Estrada C.G."/>
            <person name="Geysens S."/>
            <person name="Goldman G."/>
            <person name="de Groot P.W."/>
            <person name="Hansen K."/>
            <person name="Harris S.D."/>
            <person name="Heinekamp T."/>
            <person name="Helmstaedt K."/>
            <person name="Henrissat B."/>
            <person name="Hofmann G."/>
            <person name="Homan T."/>
            <person name="Horio T."/>
            <person name="Horiuchi H."/>
            <person name="James S."/>
            <person name="Jones M."/>
            <person name="Karaffa L."/>
            <person name="Karanyi Z."/>
            <person name="Kato M."/>
            <person name="Keller N."/>
            <person name="Kelly D.E."/>
            <person name="Kiel J.A."/>
            <person name="Kim J.M."/>
            <person name="van der Klei I.J."/>
            <person name="Klis F.M."/>
            <person name="Kovalchuk A."/>
            <person name="Krasevec N."/>
            <person name="Kubicek C.P."/>
            <person name="Liu B."/>
            <person name="Maccabe A."/>
            <person name="Meyer V."/>
            <person name="Mirabito P."/>
            <person name="Miskei M."/>
            <person name="Mos M."/>
            <person name="Mullins J."/>
            <person name="Nelson D.R."/>
            <person name="Nielsen J."/>
            <person name="Oakley B.R."/>
            <person name="Osmani S.A."/>
            <person name="Pakula T."/>
            <person name="Paszewski A."/>
            <person name="Paulsen I."/>
            <person name="Pilsyk S."/>
            <person name="Pocsi I."/>
            <person name="Punt P.J."/>
            <person name="Ram A.F."/>
            <person name="Ren Q."/>
            <person name="Robellet X."/>
            <person name="Robson G."/>
            <person name="Seiboth B."/>
            <person name="van Solingen P."/>
            <person name="Specht T."/>
            <person name="Sun J."/>
            <person name="Taheri-Talesh N."/>
            <person name="Takeshita N."/>
            <person name="Ussery D."/>
            <person name="vanKuyk P.A."/>
            <person name="Visser H."/>
            <person name="van de Vondervoort P.J."/>
            <person name="de Vries R.P."/>
            <person name="Walton J."/>
            <person name="Xiang X."/>
            <person name="Xiong Y."/>
            <person name="Zeng A.P."/>
            <person name="Brandt B.W."/>
            <person name="Cornell M.J."/>
            <person name="van den Hondel C.A."/>
            <person name="Visser J."/>
            <person name="Oliver S.G."/>
            <person name="Turner G."/>
        </authorList>
    </citation>
    <scope>GENOME REANNOTATION</scope>
    <source>
        <strain>FGSC A4 / ATCC 38163 / CBS 112.46 / NRRL 194 / M139</strain>
    </source>
</reference>
<dbReference type="EMBL" id="AACD01000010">
    <property type="protein sequence ID" value="EAA65455.1"/>
    <property type="status" value="ALT_SEQ"/>
    <property type="molecule type" value="Genomic_DNA"/>
</dbReference>
<dbReference type="EMBL" id="BN001308">
    <property type="protein sequence ID" value="CBF89000.1"/>
    <property type="molecule type" value="Genomic_DNA"/>
</dbReference>
<dbReference type="RefSeq" id="XP_658283.1">
    <property type="nucleotide sequence ID" value="XM_653191.1"/>
</dbReference>
<dbReference type="SMR" id="P0C154"/>
<dbReference type="FunCoup" id="P0C154">
    <property type="interactions" value="16"/>
</dbReference>
<dbReference type="EnsemblFungi" id="CBF89000">
    <property type="protein sequence ID" value="CBF89000"/>
    <property type="gene ID" value="ANIA_10108"/>
</dbReference>
<dbReference type="KEGG" id="ani:ANIA_10111"/>
<dbReference type="VEuPathDB" id="FungiDB:AN10108"/>
<dbReference type="eggNOG" id="ENOG502RCZR">
    <property type="taxonomic scope" value="Eukaryota"/>
</dbReference>
<dbReference type="HOGENOM" id="CLU_410505_0_0_1"/>
<dbReference type="InParanoid" id="P0C154"/>
<dbReference type="OMA" id="WYETNQA"/>
<dbReference type="OrthoDB" id="2101473at2759"/>
<dbReference type="Proteomes" id="UP000000560">
    <property type="component" value="Chromosome VIII"/>
</dbReference>
<dbReference type="Gene3D" id="2.30.110.10">
    <property type="entry name" value="Electron Transport, Fmn-binding Protein, Chain A"/>
    <property type="match status" value="1"/>
</dbReference>
<dbReference type="InterPro" id="IPR012349">
    <property type="entry name" value="Split_barrel_FMN-bd"/>
</dbReference>
<dbReference type="InterPro" id="IPR007396">
    <property type="entry name" value="TR_PAI2-type"/>
</dbReference>
<dbReference type="PANTHER" id="PTHR35802">
    <property type="entry name" value="PROTEASE SYNTHASE AND SPORULATION PROTEIN PAI 2"/>
    <property type="match status" value="1"/>
</dbReference>
<dbReference type="PANTHER" id="PTHR35802:SF1">
    <property type="entry name" value="PROTEASE SYNTHASE AND SPORULATION PROTEIN PAI 2"/>
    <property type="match status" value="1"/>
</dbReference>
<dbReference type="Pfam" id="PF04299">
    <property type="entry name" value="FMN_bind_2"/>
    <property type="match status" value="1"/>
</dbReference>
<dbReference type="PIRSF" id="PIRSF010372">
    <property type="entry name" value="PaiB"/>
    <property type="match status" value="1"/>
</dbReference>
<dbReference type="SUPFAM" id="SSF50475">
    <property type="entry name" value="FMN-binding split barrel"/>
    <property type="match status" value="1"/>
</dbReference>